<sequence length="89" mass="10148">MALTTENKAAIVADYAQSKGDTGSPEVQVALLTARINDLTPHFKEHSKDHHSRRGLLHLVSQRRKLLDYLKGKNVERYRTLITRLGLRK</sequence>
<proteinExistence type="inferred from homology"/>
<comment type="function">
    <text evidence="1">One of the primary rRNA binding proteins, it binds directly to 16S rRNA where it helps nucleate assembly of the platform of the 30S subunit by binding and bridging several RNA helices of the 16S rRNA.</text>
</comment>
<comment type="function">
    <text evidence="1">Forms an intersubunit bridge (bridge B4) with the 23S rRNA of the 50S subunit in the ribosome.</text>
</comment>
<comment type="subunit">
    <text evidence="1">Part of the 30S ribosomal subunit. Forms a bridge to the 50S subunit in the 70S ribosome, contacting the 23S rRNA.</text>
</comment>
<comment type="similarity">
    <text evidence="1">Belongs to the universal ribosomal protein uS15 family.</text>
</comment>
<keyword id="KW-0687">Ribonucleoprotein</keyword>
<keyword id="KW-0689">Ribosomal protein</keyword>
<keyword id="KW-0694">RNA-binding</keyword>
<keyword id="KW-0699">rRNA-binding</keyword>
<evidence type="ECO:0000255" key="1">
    <source>
        <dbReference type="HAMAP-Rule" id="MF_01343"/>
    </source>
</evidence>
<evidence type="ECO:0000305" key="2"/>
<feature type="chain" id="PRO_0000115426" description="Small ribosomal subunit protein uS15">
    <location>
        <begin position="1"/>
        <end position="89"/>
    </location>
</feature>
<dbReference type="EMBL" id="CP000089">
    <property type="protein sequence ID" value="AAZ47184.1"/>
    <property type="molecule type" value="Genomic_DNA"/>
</dbReference>
<dbReference type="SMR" id="Q47D97"/>
<dbReference type="STRING" id="159087.Daro_2449"/>
<dbReference type="KEGG" id="dar:Daro_2449"/>
<dbReference type="eggNOG" id="COG0184">
    <property type="taxonomic scope" value="Bacteria"/>
</dbReference>
<dbReference type="HOGENOM" id="CLU_148518_0_0_4"/>
<dbReference type="OrthoDB" id="9799262at2"/>
<dbReference type="GO" id="GO:0022627">
    <property type="term" value="C:cytosolic small ribosomal subunit"/>
    <property type="evidence" value="ECO:0007669"/>
    <property type="project" value="TreeGrafter"/>
</dbReference>
<dbReference type="GO" id="GO:0019843">
    <property type="term" value="F:rRNA binding"/>
    <property type="evidence" value="ECO:0007669"/>
    <property type="project" value="UniProtKB-UniRule"/>
</dbReference>
<dbReference type="GO" id="GO:0003735">
    <property type="term" value="F:structural constituent of ribosome"/>
    <property type="evidence" value="ECO:0007669"/>
    <property type="project" value="InterPro"/>
</dbReference>
<dbReference type="GO" id="GO:0006412">
    <property type="term" value="P:translation"/>
    <property type="evidence" value="ECO:0007669"/>
    <property type="project" value="UniProtKB-UniRule"/>
</dbReference>
<dbReference type="CDD" id="cd00353">
    <property type="entry name" value="Ribosomal_S15p_S13e"/>
    <property type="match status" value="1"/>
</dbReference>
<dbReference type="FunFam" id="1.10.287.10:FF:000002">
    <property type="entry name" value="30S ribosomal protein S15"/>
    <property type="match status" value="1"/>
</dbReference>
<dbReference type="Gene3D" id="6.10.250.3130">
    <property type="match status" value="1"/>
</dbReference>
<dbReference type="Gene3D" id="1.10.287.10">
    <property type="entry name" value="S15/NS1, RNA-binding"/>
    <property type="match status" value="1"/>
</dbReference>
<dbReference type="HAMAP" id="MF_01343_B">
    <property type="entry name" value="Ribosomal_uS15_B"/>
    <property type="match status" value="1"/>
</dbReference>
<dbReference type="InterPro" id="IPR000589">
    <property type="entry name" value="Ribosomal_uS15"/>
</dbReference>
<dbReference type="InterPro" id="IPR005290">
    <property type="entry name" value="Ribosomal_uS15_bac-type"/>
</dbReference>
<dbReference type="InterPro" id="IPR009068">
    <property type="entry name" value="uS15_NS1_RNA-bd_sf"/>
</dbReference>
<dbReference type="NCBIfam" id="TIGR00952">
    <property type="entry name" value="S15_bact"/>
    <property type="match status" value="1"/>
</dbReference>
<dbReference type="PANTHER" id="PTHR23321">
    <property type="entry name" value="RIBOSOMAL PROTEIN S15, BACTERIAL AND ORGANELLAR"/>
    <property type="match status" value="1"/>
</dbReference>
<dbReference type="PANTHER" id="PTHR23321:SF26">
    <property type="entry name" value="SMALL RIBOSOMAL SUBUNIT PROTEIN US15M"/>
    <property type="match status" value="1"/>
</dbReference>
<dbReference type="Pfam" id="PF00312">
    <property type="entry name" value="Ribosomal_S15"/>
    <property type="match status" value="1"/>
</dbReference>
<dbReference type="SMART" id="SM01387">
    <property type="entry name" value="Ribosomal_S15"/>
    <property type="match status" value="1"/>
</dbReference>
<dbReference type="SUPFAM" id="SSF47060">
    <property type="entry name" value="S15/NS1 RNA-binding domain"/>
    <property type="match status" value="1"/>
</dbReference>
<name>RS15_DECAR</name>
<accession>Q47D97</accession>
<gene>
    <name evidence="1" type="primary">rpsO</name>
    <name type="ordered locus">Daro_2449</name>
</gene>
<protein>
    <recommendedName>
        <fullName evidence="1">Small ribosomal subunit protein uS15</fullName>
    </recommendedName>
    <alternativeName>
        <fullName evidence="2">30S ribosomal protein S15</fullName>
    </alternativeName>
</protein>
<organism>
    <name type="scientific">Dechloromonas aromatica (strain RCB)</name>
    <dbReference type="NCBI Taxonomy" id="159087"/>
    <lineage>
        <taxon>Bacteria</taxon>
        <taxon>Pseudomonadati</taxon>
        <taxon>Pseudomonadota</taxon>
        <taxon>Betaproteobacteria</taxon>
        <taxon>Rhodocyclales</taxon>
        <taxon>Azonexaceae</taxon>
        <taxon>Dechloromonas</taxon>
    </lineage>
</organism>
<reference key="1">
    <citation type="journal article" date="2009" name="BMC Genomics">
        <title>Metabolic analysis of the soil microbe Dechloromonas aromatica str. RCB: indications of a surprisingly complex life-style and cryptic anaerobic pathways for aromatic degradation.</title>
        <authorList>
            <person name="Salinero K.K."/>
            <person name="Keller K."/>
            <person name="Feil W.S."/>
            <person name="Feil H."/>
            <person name="Trong S."/>
            <person name="Di Bartolo G."/>
            <person name="Lapidus A."/>
        </authorList>
    </citation>
    <scope>NUCLEOTIDE SEQUENCE [LARGE SCALE GENOMIC DNA]</scope>
    <source>
        <strain>RCB</strain>
    </source>
</reference>